<feature type="chain" id="PRO_1000054340" description="CCA-adding enzyme">
    <location>
        <begin position="1"/>
        <end position="402"/>
    </location>
</feature>
<feature type="binding site" evidence="1">
    <location>
        <position position="32"/>
    </location>
    <ligand>
        <name>ATP</name>
        <dbReference type="ChEBI" id="CHEBI:30616"/>
    </ligand>
</feature>
<feature type="binding site" evidence="1">
    <location>
        <position position="32"/>
    </location>
    <ligand>
        <name>CTP</name>
        <dbReference type="ChEBI" id="CHEBI:37563"/>
    </ligand>
</feature>
<feature type="binding site" evidence="1">
    <location>
        <position position="35"/>
    </location>
    <ligand>
        <name>ATP</name>
        <dbReference type="ChEBI" id="CHEBI:30616"/>
    </ligand>
</feature>
<feature type="binding site" evidence="1">
    <location>
        <position position="35"/>
    </location>
    <ligand>
        <name>CTP</name>
        <dbReference type="ChEBI" id="CHEBI:37563"/>
    </ligand>
</feature>
<feature type="binding site" evidence="1">
    <location>
        <position position="45"/>
    </location>
    <ligand>
        <name>Mg(2+)</name>
        <dbReference type="ChEBI" id="CHEBI:18420"/>
    </ligand>
</feature>
<feature type="binding site" evidence="1">
    <location>
        <position position="47"/>
    </location>
    <ligand>
        <name>Mg(2+)</name>
        <dbReference type="ChEBI" id="CHEBI:18420"/>
    </ligand>
</feature>
<feature type="binding site" evidence="1">
    <location>
        <position position="116"/>
    </location>
    <ligand>
        <name>ATP</name>
        <dbReference type="ChEBI" id="CHEBI:30616"/>
    </ligand>
</feature>
<feature type="binding site" evidence="1">
    <location>
        <position position="116"/>
    </location>
    <ligand>
        <name>CTP</name>
        <dbReference type="ChEBI" id="CHEBI:37563"/>
    </ligand>
</feature>
<feature type="binding site" evidence="1">
    <location>
        <position position="159"/>
    </location>
    <ligand>
        <name>ATP</name>
        <dbReference type="ChEBI" id="CHEBI:30616"/>
    </ligand>
</feature>
<feature type="binding site" evidence="1">
    <location>
        <position position="159"/>
    </location>
    <ligand>
        <name>CTP</name>
        <dbReference type="ChEBI" id="CHEBI:37563"/>
    </ligand>
</feature>
<feature type="binding site" evidence="1">
    <location>
        <position position="162"/>
    </location>
    <ligand>
        <name>ATP</name>
        <dbReference type="ChEBI" id="CHEBI:30616"/>
    </ligand>
</feature>
<feature type="binding site" evidence="1">
    <location>
        <position position="162"/>
    </location>
    <ligand>
        <name>CTP</name>
        <dbReference type="ChEBI" id="CHEBI:37563"/>
    </ligand>
</feature>
<feature type="binding site" evidence="1">
    <location>
        <position position="165"/>
    </location>
    <ligand>
        <name>ATP</name>
        <dbReference type="ChEBI" id="CHEBI:30616"/>
    </ligand>
</feature>
<feature type="binding site" evidence="1">
    <location>
        <position position="165"/>
    </location>
    <ligand>
        <name>CTP</name>
        <dbReference type="ChEBI" id="CHEBI:37563"/>
    </ligand>
</feature>
<feature type="binding site" evidence="1">
    <location>
        <position position="168"/>
    </location>
    <ligand>
        <name>ATP</name>
        <dbReference type="ChEBI" id="CHEBI:30616"/>
    </ligand>
</feature>
<feature type="binding site" evidence="1">
    <location>
        <position position="168"/>
    </location>
    <ligand>
        <name>CTP</name>
        <dbReference type="ChEBI" id="CHEBI:37563"/>
    </ligand>
</feature>
<keyword id="KW-0067">ATP-binding</keyword>
<keyword id="KW-0460">Magnesium</keyword>
<keyword id="KW-0479">Metal-binding</keyword>
<keyword id="KW-0547">Nucleotide-binding</keyword>
<keyword id="KW-0548">Nucleotidyltransferase</keyword>
<keyword id="KW-0692">RNA repair</keyword>
<keyword id="KW-0694">RNA-binding</keyword>
<keyword id="KW-0808">Transferase</keyword>
<keyword id="KW-0819">tRNA processing</keyword>
<evidence type="ECO:0000255" key="1">
    <source>
        <dbReference type="HAMAP-Rule" id="MF_01263"/>
    </source>
</evidence>
<reference key="1">
    <citation type="journal article" date="2006" name="Proc. Natl. Acad. Sci. U.S.A.">
        <title>Molecular genetic anatomy of inter- and intraserotype variation in the human bacterial pathogen group A Streptococcus.</title>
        <authorList>
            <person name="Beres S.B."/>
            <person name="Richter E.W."/>
            <person name="Nagiec M.J."/>
            <person name="Sumby P."/>
            <person name="Porcella S.F."/>
            <person name="DeLeo F.R."/>
            <person name="Musser J.M."/>
        </authorList>
    </citation>
    <scope>NUCLEOTIDE SEQUENCE [LARGE SCALE GENOMIC DNA]</scope>
    <source>
        <strain>MGAS10750</strain>
    </source>
</reference>
<gene>
    <name evidence="1" type="primary">cca</name>
    <name type="ordered locus">MGAS10750_Spy0764</name>
</gene>
<dbReference type="EC" id="2.7.7.72" evidence="1"/>
<dbReference type="EMBL" id="CP000262">
    <property type="protein sequence ID" value="ABF37714.1"/>
    <property type="molecule type" value="Genomic_DNA"/>
</dbReference>
<dbReference type="SMR" id="Q1J760"/>
<dbReference type="KEGG" id="spi:MGAS10750_Spy0764"/>
<dbReference type="HOGENOM" id="CLU_015961_3_1_9"/>
<dbReference type="Proteomes" id="UP000002434">
    <property type="component" value="Chromosome"/>
</dbReference>
<dbReference type="GO" id="GO:0005524">
    <property type="term" value="F:ATP binding"/>
    <property type="evidence" value="ECO:0007669"/>
    <property type="project" value="UniProtKB-UniRule"/>
</dbReference>
<dbReference type="GO" id="GO:0004810">
    <property type="term" value="F:CCA tRNA nucleotidyltransferase activity"/>
    <property type="evidence" value="ECO:0007669"/>
    <property type="project" value="UniProtKB-UniRule"/>
</dbReference>
<dbReference type="GO" id="GO:0000287">
    <property type="term" value="F:magnesium ion binding"/>
    <property type="evidence" value="ECO:0007669"/>
    <property type="project" value="UniProtKB-UniRule"/>
</dbReference>
<dbReference type="GO" id="GO:0000049">
    <property type="term" value="F:tRNA binding"/>
    <property type="evidence" value="ECO:0007669"/>
    <property type="project" value="UniProtKB-UniRule"/>
</dbReference>
<dbReference type="GO" id="GO:0042245">
    <property type="term" value="P:RNA repair"/>
    <property type="evidence" value="ECO:0007669"/>
    <property type="project" value="UniProtKB-KW"/>
</dbReference>
<dbReference type="GO" id="GO:0001680">
    <property type="term" value="P:tRNA 3'-terminal CCA addition"/>
    <property type="evidence" value="ECO:0007669"/>
    <property type="project" value="UniProtKB-UniRule"/>
</dbReference>
<dbReference type="CDD" id="cd05398">
    <property type="entry name" value="NT_ClassII-CCAase"/>
    <property type="match status" value="1"/>
</dbReference>
<dbReference type="Gene3D" id="1.10.110.30">
    <property type="match status" value="1"/>
</dbReference>
<dbReference type="Gene3D" id="1.10.246.80">
    <property type="match status" value="1"/>
</dbReference>
<dbReference type="Gene3D" id="1.20.58.560">
    <property type="match status" value="1"/>
</dbReference>
<dbReference type="Gene3D" id="3.30.460.10">
    <property type="entry name" value="Beta Polymerase, domain 2"/>
    <property type="match status" value="1"/>
</dbReference>
<dbReference type="HAMAP" id="MF_01263">
    <property type="entry name" value="CCA_bact_type3"/>
    <property type="match status" value="1"/>
</dbReference>
<dbReference type="InterPro" id="IPR050264">
    <property type="entry name" value="Bact_CCA-adding_enz_type3_sf"/>
</dbReference>
<dbReference type="InterPro" id="IPR032810">
    <property type="entry name" value="CCA-adding_enz_C"/>
</dbReference>
<dbReference type="InterPro" id="IPR023068">
    <property type="entry name" value="CCA-adding_enz_firmicutes"/>
</dbReference>
<dbReference type="InterPro" id="IPR043519">
    <property type="entry name" value="NT_sf"/>
</dbReference>
<dbReference type="InterPro" id="IPR002646">
    <property type="entry name" value="PolA_pol_head_dom"/>
</dbReference>
<dbReference type="InterPro" id="IPR032828">
    <property type="entry name" value="PolyA_RNA-bd"/>
</dbReference>
<dbReference type="NCBIfam" id="NF009814">
    <property type="entry name" value="PRK13299.1"/>
    <property type="match status" value="1"/>
</dbReference>
<dbReference type="PANTHER" id="PTHR46173">
    <property type="entry name" value="CCA TRNA NUCLEOTIDYLTRANSFERASE 1, MITOCHONDRIAL"/>
    <property type="match status" value="1"/>
</dbReference>
<dbReference type="PANTHER" id="PTHR46173:SF1">
    <property type="entry name" value="CCA TRNA NUCLEOTIDYLTRANSFERASE 1, MITOCHONDRIAL"/>
    <property type="match status" value="1"/>
</dbReference>
<dbReference type="Pfam" id="PF01743">
    <property type="entry name" value="PolyA_pol"/>
    <property type="match status" value="1"/>
</dbReference>
<dbReference type="Pfam" id="PF12627">
    <property type="entry name" value="PolyA_pol_RNAbd"/>
    <property type="match status" value="1"/>
</dbReference>
<dbReference type="Pfam" id="PF13735">
    <property type="entry name" value="tRNA_NucTran2_2"/>
    <property type="match status" value="1"/>
</dbReference>
<dbReference type="SUPFAM" id="SSF81301">
    <property type="entry name" value="Nucleotidyltransferase"/>
    <property type="match status" value="1"/>
</dbReference>
<dbReference type="SUPFAM" id="SSF81891">
    <property type="entry name" value="Poly A polymerase C-terminal region-like"/>
    <property type="match status" value="1"/>
</dbReference>
<protein>
    <recommendedName>
        <fullName evidence="1">CCA-adding enzyme</fullName>
        <ecNumber evidence="1">2.7.7.72</ecNumber>
    </recommendedName>
    <alternativeName>
        <fullName evidence="1">CCA tRNA nucleotidyltransferase</fullName>
    </alternativeName>
    <alternativeName>
        <fullName evidence="1">tRNA CCA-pyrophosphorylase</fullName>
    </alternativeName>
    <alternativeName>
        <fullName evidence="1">tRNA adenylyl-/cytidylyl- transferase</fullName>
    </alternativeName>
    <alternativeName>
        <fullName evidence="1">tRNA nucleotidyltransferase</fullName>
    </alternativeName>
    <alternativeName>
        <fullName evidence="1">tRNA-NT</fullName>
    </alternativeName>
</protein>
<proteinExistence type="inferred from homology"/>
<accession>Q1J760</accession>
<sequence>MKLMTMPSEFQKALPILTKIKEAGYEAYFVGGSVRDVLLERPIHDVDIATSSYPEETKAIFNRTVDVGIEHGTVLVLENGGEYEITTFRTEDVYVDYRRPSQVSFVRSLEEDLKRRDFTVNALALDENGQVIDKFRGLIDLEQKRLRAVGKAEERFEEDALRIMRGFRFAASLDFDIEAATFEAMRSHSPLLEKISVERSFTEFDKLLMAPHWRKGISAMIACQAYDYLPGLKQREAGLNHLIVSLKDNFTFSDHHQAWAYVMISLAIEDPKSFLKAWKTSNDFQRYVTKLIALYRIRQERSFEKLDIYQYGKEMASLVEGLRKAQSLSVDMDHIEALDQALAIHNKHDIVLNGSHLIKDFGMEPGPQLGLMLEKVELAIVEGCLDNDFTTIEAFVREELAT</sequence>
<name>CCA_STRPF</name>
<organism>
    <name type="scientific">Streptococcus pyogenes serotype M4 (strain MGAS10750)</name>
    <dbReference type="NCBI Taxonomy" id="370554"/>
    <lineage>
        <taxon>Bacteria</taxon>
        <taxon>Bacillati</taxon>
        <taxon>Bacillota</taxon>
        <taxon>Bacilli</taxon>
        <taxon>Lactobacillales</taxon>
        <taxon>Streptococcaceae</taxon>
        <taxon>Streptococcus</taxon>
    </lineage>
</organism>
<comment type="function">
    <text evidence="1">Catalyzes the addition and repair of the essential 3'-terminal CCA sequence in tRNAs without using a nucleic acid template. Adds these three nucleotides in the order of C, C, and A to the tRNA nucleotide-73, using CTP and ATP as substrates and producing inorganic pyrophosphate. tRNA 3'-terminal CCA addition is required both for tRNA processing and repair. Also involved in tRNA surveillance by mediating tandem CCA addition to generate a CCACCA at the 3' terminus of unstable tRNAs. While stable tRNAs receive only 3'-terminal CCA, unstable tRNAs are marked with CCACCA and rapidly degraded.</text>
</comment>
<comment type="catalytic activity">
    <reaction evidence="1">
        <text>a tRNA precursor + 2 CTP + ATP = a tRNA with a 3' CCA end + 3 diphosphate</text>
        <dbReference type="Rhea" id="RHEA:14433"/>
        <dbReference type="Rhea" id="RHEA-COMP:10465"/>
        <dbReference type="Rhea" id="RHEA-COMP:10468"/>
        <dbReference type="ChEBI" id="CHEBI:30616"/>
        <dbReference type="ChEBI" id="CHEBI:33019"/>
        <dbReference type="ChEBI" id="CHEBI:37563"/>
        <dbReference type="ChEBI" id="CHEBI:74896"/>
        <dbReference type="ChEBI" id="CHEBI:83071"/>
        <dbReference type="EC" id="2.7.7.72"/>
    </reaction>
</comment>
<comment type="catalytic activity">
    <reaction evidence="1">
        <text>a tRNA with a 3' CCA end + 2 CTP + ATP = a tRNA with a 3' CCACCA end + 3 diphosphate</text>
        <dbReference type="Rhea" id="RHEA:76235"/>
        <dbReference type="Rhea" id="RHEA-COMP:10468"/>
        <dbReference type="Rhea" id="RHEA-COMP:18655"/>
        <dbReference type="ChEBI" id="CHEBI:30616"/>
        <dbReference type="ChEBI" id="CHEBI:33019"/>
        <dbReference type="ChEBI" id="CHEBI:37563"/>
        <dbReference type="ChEBI" id="CHEBI:83071"/>
        <dbReference type="ChEBI" id="CHEBI:195187"/>
    </reaction>
    <physiologicalReaction direction="left-to-right" evidence="1">
        <dbReference type="Rhea" id="RHEA:76236"/>
    </physiologicalReaction>
</comment>
<comment type="cofactor">
    <cofactor evidence="1">
        <name>Mg(2+)</name>
        <dbReference type="ChEBI" id="CHEBI:18420"/>
    </cofactor>
</comment>
<comment type="subunit">
    <text evidence="1">Homodimer.</text>
</comment>
<comment type="miscellaneous">
    <text evidence="1">A single active site specifically recognizes both ATP and CTP and is responsible for their addition.</text>
</comment>
<comment type="similarity">
    <text evidence="1">Belongs to the tRNA nucleotidyltransferase/poly(A) polymerase family. Bacterial CCA-adding enzyme type 3 subfamily.</text>
</comment>